<name>KATG_CERS5</name>
<protein>
    <recommendedName>
        <fullName evidence="1">Catalase-peroxidase</fullName>
        <shortName evidence="1">CP</shortName>
        <ecNumber evidence="1">1.11.1.21</ecNumber>
    </recommendedName>
    <alternativeName>
        <fullName evidence="1">Peroxidase/catalase</fullName>
    </alternativeName>
</protein>
<proteinExistence type="inferred from homology"/>
<comment type="function">
    <text evidence="1">Bifunctional enzyme with both catalase and broad-spectrum peroxidase activity.</text>
</comment>
<comment type="catalytic activity">
    <reaction evidence="1">
        <text>H2O2 + AH2 = A + 2 H2O</text>
        <dbReference type="Rhea" id="RHEA:30275"/>
        <dbReference type="ChEBI" id="CHEBI:13193"/>
        <dbReference type="ChEBI" id="CHEBI:15377"/>
        <dbReference type="ChEBI" id="CHEBI:16240"/>
        <dbReference type="ChEBI" id="CHEBI:17499"/>
        <dbReference type="EC" id="1.11.1.21"/>
    </reaction>
</comment>
<comment type="catalytic activity">
    <reaction evidence="1">
        <text>2 H2O2 = O2 + 2 H2O</text>
        <dbReference type="Rhea" id="RHEA:20309"/>
        <dbReference type="ChEBI" id="CHEBI:15377"/>
        <dbReference type="ChEBI" id="CHEBI:15379"/>
        <dbReference type="ChEBI" id="CHEBI:16240"/>
        <dbReference type="EC" id="1.11.1.21"/>
    </reaction>
</comment>
<comment type="cofactor">
    <cofactor evidence="1">
        <name>heme b</name>
        <dbReference type="ChEBI" id="CHEBI:60344"/>
    </cofactor>
    <text evidence="1">Binds 1 heme b (iron(II)-protoporphyrin IX) group per dimer.</text>
</comment>
<comment type="subunit">
    <text evidence="1">Homodimer or homotetramer.</text>
</comment>
<comment type="PTM">
    <text evidence="1">Formation of the three residue Trp-Tyr-Met cross-link is important for the catalase, but not the peroxidase activity of the enzyme.</text>
</comment>
<comment type="similarity">
    <text evidence="1">Belongs to the peroxidase family. Peroxidase/catalase subfamily.</text>
</comment>
<organism>
    <name type="scientific">Cereibacter sphaeroides (strain ATCC 17025 / ATH 2.4.3)</name>
    <name type="common">Rhodobacter sphaeroides</name>
    <dbReference type="NCBI Taxonomy" id="349102"/>
    <lineage>
        <taxon>Bacteria</taxon>
        <taxon>Pseudomonadati</taxon>
        <taxon>Pseudomonadota</taxon>
        <taxon>Alphaproteobacteria</taxon>
        <taxon>Rhodobacterales</taxon>
        <taxon>Paracoccaceae</taxon>
        <taxon>Cereibacter</taxon>
    </lineage>
</organism>
<dbReference type="EC" id="1.11.1.21" evidence="1"/>
<dbReference type="EMBL" id="CP000662">
    <property type="protein sequence ID" value="ABP72190.1"/>
    <property type="molecule type" value="Genomic_DNA"/>
</dbReference>
<dbReference type="SMR" id="A4WXS6"/>
<dbReference type="KEGG" id="rsq:Rsph17025_3306"/>
<dbReference type="HOGENOM" id="CLU_025424_2_0_5"/>
<dbReference type="BioCyc" id="RSPH349102:G1G8M-3410-MONOMER"/>
<dbReference type="GO" id="GO:0005829">
    <property type="term" value="C:cytosol"/>
    <property type="evidence" value="ECO:0007669"/>
    <property type="project" value="TreeGrafter"/>
</dbReference>
<dbReference type="GO" id="GO:0004096">
    <property type="term" value="F:catalase activity"/>
    <property type="evidence" value="ECO:0007669"/>
    <property type="project" value="UniProtKB-UniRule"/>
</dbReference>
<dbReference type="GO" id="GO:0020037">
    <property type="term" value="F:heme binding"/>
    <property type="evidence" value="ECO:0007669"/>
    <property type="project" value="InterPro"/>
</dbReference>
<dbReference type="GO" id="GO:0046872">
    <property type="term" value="F:metal ion binding"/>
    <property type="evidence" value="ECO:0007669"/>
    <property type="project" value="UniProtKB-KW"/>
</dbReference>
<dbReference type="GO" id="GO:0070301">
    <property type="term" value="P:cellular response to hydrogen peroxide"/>
    <property type="evidence" value="ECO:0007669"/>
    <property type="project" value="TreeGrafter"/>
</dbReference>
<dbReference type="GO" id="GO:0042744">
    <property type="term" value="P:hydrogen peroxide catabolic process"/>
    <property type="evidence" value="ECO:0007669"/>
    <property type="project" value="UniProtKB-KW"/>
</dbReference>
<dbReference type="CDD" id="cd00649">
    <property type="entry name" value="catalase_peroxidase_1"/>
    <property type="match status" value="1"/>
</dbReference>
<dbReference type="CDD" id="cd08200">
    <property type="entry name" value="catalase_peroxidase_2"/>
    <property type="match status" value="1"/>
</dbReference>
<dbReference type="FunFam" id="1.10.420.10:FF:000004">
    <property type="entry name" value="Catalase-peroxidase"/>
    <property type="match status" value="1"/>
</dbReference>
<dbReference type="FunFam" id="1.10.520.10:FF:000002">
    <property type="entry name" value="Catalase-peroxidase"/>
    <property type="match status" value="1"/>
</dbReference>
<dbReference type="Gene3D" id="1.10.520.10">
    <property type="match status" value="2"/>
</dbReference>
<dbReference type="Gene3D" id="1.10.420.10">
    <property type="entry name" value="Peroxidase, domain 2"/>
    <property type="match status" value="2"/>
</dbReference>
<dbReference type="HAMAP" id="MF_01961">
    <property type="entry name" value="Catal_peroxid"/>
    <property type="match status" value="1"/>
</dbReference>
<dbReference type="InterPro" id="IPR000763">
    <property type="entry name" value="Catalase_peroxidase"/>
</dbReference>
<dbReference type="InterPro" id="IPR002016">
    <property type="entry name" value="Haem_peroxidase"/>
</dbReference>
<dbReference type="InterPro" id="IPR010255">
    <property type="entry name" value="Haem_peroxidase_sf"/>
</dbReference>
<dbReference type="InterPro" id="IPR019794">
    <property type="entry name" value="Peroxidases_AS"/>
</dbReference>
<dbReference type="NCBIfam" id="TIGR00198">
    <property type="entry name" value="cat_per_HPI"/>
    <property type="match status" value="1"/>
</dbReference>
<dbReference type="NCBIfam" id="NF011635">
    <property type="entry name" value="PRK15061.1"/>
    <property type="match status" value="1"/>
</dbReference>
<dbReference type="PANTHER" id="PTHR30555:SF6">
    <property type="entry name" value="CATALASE-PEROXIDASE"/>
    <property type="match status" value="1"/>
</dbReference>
<dbReference type="PANTHER" id="PTHR30555">
    <property type="entry name" value="HYDROPEROXIDASE I, BIFUNCTIONAL CATALASE-PEROXIDASE"/>
    <property type="match status" value="1"/>
</dbReference>
<dbReference type="Pfam" id="PF00141">
    <property type="entry name" value="peroxidase"/>
    <property type="match status" value="2"/>
</dbReference>
<dbReference type="PRINTS" id="PR00460">
    <property type="entry name" value="BPEROXIDASE"/>
</dbReference>
<dbReference type="PRINTS" id="PR00458">
    <property type="entry name" value="PEROXIDASE"/>
</dbReference>
<dbReference type="SUPFAM" id="SSF48113">
    <property type="entry name" value="Heme-dependent peroxidases"/>
    <property type="match status" value="2"/>
</dbReference>
<dbReference type="PROSITE" id="PS00436">
    <property type="entry name" value="PEROXIDASE_2"/>
    <property type="match status" value="1"/>
</dbReference>
<dbReference type="PROSITE" id="PS50873">
    <property type="entry name" value="PEROXIDASE_4"/>
    <property type="match status" value="1"/>
</dbReference>
<reference key="1">
    <citation type="submission" date="2007-04" db="EMBL/GenBank/DDBJ databases">
        <title>Complete sequence of plasmid pRSPA01 of Rhodobacter sphaeroides ATCC 17025.</title>
        <authorList>
            <consortium name="US DOE Joint Genome Institute"/>
            <person name="Copeland A."/>
            <person name="Lucas S."/>
            <person name="Lapidus A."/>
            <person name="Barry K."/>
            <person name="Detter J.C."/>
            <person name="Glavina del Rio T."/>
            <person name="Hammon N."/>
            <person name="Israni S."/>
            <person name="Dalin E."/>
            <person name="Tice H."/>
            <person name="Pitluck S."/>
            <person name="Chertkov O."/>
            <person name="Brettin T."/>
            <person name="Bruce D."/>
            <person name="Han C."/>
            <person name="Schmutz J."/>
            <person name="Larimer F."/>
            <person name="Land M."/>
            <person name="Hauser L."/>
            <person name="Kyrpides N."/>
            <person name="Kim E."/>
            <person name="Richardson P."/>
            <person name="Mackenzie C."/>
            <person name="Choudhary M."/>
            <person name="Donohue T.J."/>
            <person name="Kaplan S."/>
        </authorList>
    </citation>
    <scope>NUCLEOTIDE SEQUENCE [LARGE SCALE GENOMIC DNA]</scope>
    <source>
        <strain>ATCC 17025 / ATH 2.4.3</strain>
    </source>
</reference>
<gene>
    <name evidence="1" type="primary">katG</name>
    <name type="ordered locus">Rsph17025_3306</name>
</gene>
<feature type="chain" id="PRO_0000354889" description="Catalase-peroxidase">
    <location>
        <begin position="1"/>
        <end position="724"/>
    </location>
</feature>
<feature type="active site" description="Proton acceptor" evidence="1">
    <location>
        <position position="99"/>
    </location>
</feature>
<feature type="binding site" description="axial binding residue" evidence="1">
    <location>
        <position position="267"/>
    </location>
    <ligand>
        <name>heme b</name>
        <dbReference type="ChEBI" id="CHEBI:60344"/>
    </ligand>
    <ligandPart>
        <name>Fe</name>
        <dbReference type="ChEBI" id="CHEBI:18248"/>
    </ligandPart>
</feature>
<feature type="site" description="Transition state stabilizer" evidence="1">
    <location>
        <position position="95"/>
    </location>
</feature>
<feature type="cross-link" description="Tryptophyl-tyrosyl-methioninium (Trp-Tyr) (with M-252)" evidence="1">
    <location>
        <begin position="98"/>
        <end position="226"/>
    </location>
</feature>
<feature type="cross-link" description="Tryptophyl-tyrosyl-methioninium (Tyr-Met) (with W-98)" evidence="1">
    <location>
        <begin position="226"/>
        <end position="252"/>
    </location>
</feature>
<sequence>MDGNGIGSTGKCPVMHGGNTAMGTSNTDWWPNALNLDILHQHDSKTNPMGPGFDYRRALQGLDVTALKRDLHALMTDSQDWWPADWGHYGGLMIRMAWHAAGSYRTADGRGGGGTGNQRFAPLNSWPDNVNLDKARRLLWPVKKKYGNAISWADLIILAGTVAYESMGLKTFGFAFGRADIWHPEKDTYWGAEKEWLAPSDSRYGDVADPASMENPLAAVQMGLIYVNPQGVNGEPDPLRTALHVRETFARMAMNDEETVALTAGGHTVGKCHGNGDAALIGPDPEAADVVEQGLGWMNHSTRGVGRNTVTSGIEGAWTTHPTRWDNGYFDLLFGYEWELRKSPAGAWQWEPIDIREEDKPVDVEDPSIRYNPIMTDADMAMKMDPIYRPIAERFHRDPAYFSDVFARAWFKLTHRDMGPKARYLGPDVPQEDLIWQDPVPAGRTDYDVAAVKARIAASGLSVAELVSTAWDSARTFRGSDMRGGANGARIRLAPQKDWEGNEPARLATVLGVLEGIAAETGASVADVIVLGGNVGVEQAARAAGFEITVPFAPGRGDATDDMTDAASFDVLEPIHDAFRNWLKKDYTVSPEELMLDRAQLMGLTAHEMTVLLGGMRVLGTNHGGTKHGVLTDREGALTTDFFVNLTDMANVWKPADANLYEIRDRRTGAVKWTATRVDLVFGSNSVLRAYAEVYAQDDSREKFVQDFVAAWAKVMNADRFDIA</sequence>
<geneLocation type="plasmid">
    <name>pRSPA01</name>
</geneLocation>
<evidence type="ECO:0000255" key="1">
    <source>
        <dbReference type="HAMAP-Rule" id="MF_01961"/>
    </source>
</evidence>
<keyword id="KW-0349">Heme</keyword>
<keyword id="KW-0376">Hydrogen peroxide</keyword>
<keyword id="KW-0408">Iron</keyword>
<keyword id="KW-0479">Metal-binding</keyword>
<keyword id="KW-0560">Oxidoreductase</keyword>
<keyword id="KW-0575">Peroxidase</keyword>
<keyword id="KW-0614">Plasmid</keyword>
<accession>A4WXS6</accession>